<reference key="1">
    <citation type="journal article" date="2004" name="Nucleic Acids Res.">
        <title>The genome sequence of Bacillus cereus ATCC 10987 reveals metabolic adaptations and a large plasmid related to Bacillus anthracis pXO1.</title>
        <authorList>
            <person name="Rasko D.A."/>
            <person name="Ravel J."/>
            <person name="Oekstad O.A."/>
            <person name="Helgason E."/>
            <person name="Cer R.Z."/>
            <person name="Jiang L."/>
            <person name="Shores K.A."/>
            <person name="Fouts D.E."/>
            <person name="Tourasse N.J."/>
            <person name="Angiuoli S.V."/>
            <person name="Kolonay J.F."/>
            <person name="Nelson W.C."/>
            <person name="Kolstoe A.-B."/>
            <person name="Fraser C.M."/>
            <person name="Read T.D."/>
        </authorList>
    </citation>
    <scope>NUCLEOTIDE SEQUENCE [LARGE SCALE GENOMIC DNA]</scope>
    <source>
        <strain>ATCC 10987 / NRS 248</strain>
    </source>
</reference>
<sequence>MIKPLIEFCVGNLASGSQAALEKLEKDPNLDVMEYGCLGYCGICFEGPFALVNGEVVQGATVEELVNNVYEYLDENPMF</sequence>
<comment type="similarity">
    <text evidence="1">Belongs to the UPF0349 family.</text>
</comment>
<comment type="sequence caution" evidence="2">
    <conflict type="erroneous initiation">
        <sequence resource="EMBL-CDS" id="AAS43976"/>
    </conflict>
</comment>
<accession>Q72YE6</accession>
<name>Y5075_BACC1</name>
<organism>
    <name type="scientific">Bacillus cereus (strain ATCC 10987 / NRS 248)</name>
    <dbReference type="NCBI Taxonomy" id="222523"/>
    <lineage>
        <taxon>Bacteria</taxon>
        <taxon>Bacillati</taxon>
        <taxon>Bacillota</taxon>
        <taxon>Bacilli</taxon>
        <taxon>Bacillales</taxon>
        <taxon>Bacillaceae</taxon>
        <taxon>Bacillus</taxon>
        <taxon>Bacillus cereus group</taxon>
    </lineage>
</organism>
<dbReference type="EMBL" id="AE017194">
    <property type="protein sequence ID" value="AAS43976.1"/>
    <property type="status" value="ALT_INIT"/>
    <property type="molecule type" value="Genomic_DNA"/>
</dbReference>
<dbReference type="SMR" id="Q72YE6"/>
<dbReference type="KEGG" id="bca:BCE_5075"/>
<dbReference type="HOGENOM" id="CLU_182025_0_0_9"/>
<dbReference type="Proteomes" id="UP000002527">
    <property type="component" value="Chromosome"/>
</dbReference>
<dbReference type="HAMAP" id="MF_01542">
    <property type="entry name" value="UPF0349"/>
    <property type="match status" value="1"/>
</dbReference>
<dbReference type="InterPro" id="IPR009910">
    <property type="entry name" value="DUF1450"/>
</dbReference>
<dbReference type="InterPro" id="IPR022916">
    <property type="entry name" value="UPF0349"/>
</dbReference>
<dbReference type="NCBIfam" id="NF010190">
    <property type="entry name" value="PRK13669.1"/>
    <property type="match status" value="1"/>
</dbReference>
<dbReference type="Pfam" id="PF07293">
    <property type="entry name" value="DUF1450"/>
    <property type="match status" value="1"/>
</dbReference>
<gene>
    <name type="ordered locus">BCE_5075</name>
</gene>
<proteinExistence type="inferred from homology"/>
<evidence type="ECO:0000255" key="1">
    <source>
        <dbReference type="HAMAP-Rule" id="MF_01542"/>
    </source>
</evidence>
<evidence type="ECO:0000305" key="2"/>
<protein>
    <recommendedName>
        <fullName evidence="1">UPF0349 protein BCE_5075</fullName>
    </recommendedName>
</protein>
<feature type="chain" id="PRO_0000165882" description="UPF0349 protein BCE_5075">
    <location>
        <begin position="1"/>
        <end position="79"/>
    </location>
</feature>